<organism>
    <name type="scientific">Acetivibrio thermocellus (strain ATCC 27405 / DSM 1237 / JCM 9322 / NBRC 103400 / NCIMB 10682 / NRRL B-4536 / VPI 7372)</name>
    <name type="common">Clostridium thermocellum</name>
    <dbReference type="NCBI Taxonomy" id="203119"/>
    <lineage>
        <taxon>Bacteria</taxon>
        <taxon>Bacillati</taxon>
        <taxon>Bacillota</taxon>
        <taxon>Clostridia</taxon>
        <taxon>Eubacteriales</taxon>
        <taxon>Oscillospiraceae</taxon>
        <taxon>Acetivibrio</taxon>
    </lineage>
</organism>
<proteinExistence type="inferred from homology"/>
<name>RL14_ACET2</name>
<feature type="chain" id="PRO_1000055567" description="Large ribosomal subunit protein uL14">
    <location>
        <begin position="1"/>
        <end position="122"/>
    </location>
</feature>
<evidence type="ECO:0000255" key="1">
    <source>
        <dbReference type="HAMAP-Rule" id="MF_01367"/>
    </source>
</evidence>
<evidence type="ECO:0000305" key="2"/>
<dbReference type="EMBL" id="CP000568">
    <property type="protein sequence ID" value="ABN54111.1"/>
    <property type="molecule type" value="Genomic_DNA"/>
</dbReference>
<dbReference type="RefSeq" id="WP_003514643.1">
    <property type="nucleotide sequence ID" value="NC_009012.1"/>
</dbReference>
<dbReference type="SMR" id="A3DJI2"/>
<dbReference type="STRING" id="203119.Cthe_2913"/>
<dbReference type="GeneID" id="35804020"/>
<dbReference type="KEGG" id="cth:Cthe_2913"/>
<dbReference type="eggNOG" id="COG0093">
    <property type="taxonomic scope" value="Bacteria"/>
</dbReference>
<dbReference type="HOGENOM" id="CLU_095071_2_1_9"/>
<dbReference type="OrthoDB" id="9806379at2"/>
<dbReference type="Proteomes" id="UP000002145">
    <property type="component" value="Chromosome"/>
</dbReference>
<dbReference type="GO" id="GO:0022625">
    <property type="term" value="C:cytosolic large ribosomal subunit"/>
    <property type="evidence" value="ECO:0007669"/>
    <property type="project" value="TreeGrafter"/>
</dbReference>
<dbReference type="GO" id="GO:0070180">
    <property type="term" value="F:large ribosomal subunit rRNA binding"/>
    <property type="evidence" value="ECO:0007669"/>
    <property type="project" value="TreeGrafter"/>
</dbReference>
<dbReference type="GO" id="GO:0003735">
    <property type="term" value="F:structural constituent of ribosome"/>
    <property type="evidence" value="ECO:0007669"/>
    <property type="project" value="InterPro"/>
</dbReference>
<dbReference type="GO" id="GO:0006412">
    <property type="term" value="P:translation"/>
    <property type="evidence" value="ECO:0007669"/>
    <property type="project" value="UniProtKB-UniRule"/>
</dbReference>
<dbReference type="CDD" id="cd00337">
    <property type="entry name" value="Ribosomal_uL14"/>
    <property type="match status" value="1"/>
</dbReference>
<dbReference type="FunFam" id="2.40.150.20:FF:000001">
    <property type="entry name" value="50S ribosomal protein L14"/>
    <property type="match status" value="1"/>
</dbReference>
<dbReference type="Gene3D" id="2.40.150.20">
    <property type="entry name" value="Ribosomal protein L14"/>
    <property type="match status" value="1"/>
</dbReference>
<dbReference type="HAMAP" id="MF_01367">
    <property type="entry name" value="Ribosomal_uL14"/>
    <property type="match status" value="1"/>
</dbReference>
<dbReference type="InterPro" id="IPR000218">
    <property type="entry name" value="Ribosomal_uL14"/>
</dbReference>
<dbReference type="InterPro" id="IPR005745">
    <property type="entry name" value="Ribosomal_uL14_bac-type"/>
</dbReference>
<dbReference type="InterPro" id="IPR036853">
    <property type="entry name" value="Ribosomal_uL14_sf"/>
</dbReference>
<dbReference type="NCBIfam" id="TIGR01067">
    <property type="entry name" value="rplN_bact"/>
    <property type="match status" value="1"/>
</dbReference>
<dbReference type="PANTHER" id="PTHR11761">
    <property type="entry name" value="50S/60S RIBOSOMAL PROTEIN L14/L23"/>
    <property type="match status" value="1"/>
</dbReference>
<dbReference type="PANTHER" id="PTHR11761:SF3">
    <property type="entry name" value="LARGE RIBOSOMAL SUBUNIT PROTEIN UL14M"/>
    <property type="match status" value="1"/>
</dbReference>
<dbReference type="Pfam" id="PF00238">
    <property type="entry name" value="Ribosomal_L14"/>
    <property type="match status" value="1"/>
</dbReference>
<dbReference type="SMART" id="SM01374">
    <property type="entry name" value="Ribosomal_L14"/>
    <property type="match status" value="1"/>
</dbReference>
<dbReference type="SUPFAM" id="SSF50193">
    <property type="entry name" value="Ribosomal protein L14"/>
    <property type="match status" value="1"/>
</dbReference>
<accession>A3DJI2</accession>
<keyword id="KW-1185">Reference proteome</keyword>
<keyword id="KW-0687">Ribonucleoprotein</keyword>
<keyword id="KW-0689">Ribosomal protein</keyword>
<keyword id="KW-0694">RNA-binding</keyword>
<keyword id="KW-0699">rRNA-binding</keyword>
<reference key="1">
    <citation type="submission" date="2007-02" db="EMBL/GenBank/DDBJ databases">
        <title>Complete sequence of Clostridium thermocellum ATCC 27405.</title>
        <authorList>
            <consortium name="US DOE Joint Genome Institute"/>
            <person name="Copeland A."/>
            <person name="Lucas S."/>
            <person name="Lapidus A."/>
            <person name="Barry K."/>
            <person name="Detter J.C."/>
            <person name="Glavina del Rio T."/>
            <person name="Hammon N."/>
            <person name="Israni S."/>
            <person name="Dalin E."/>
            <person name="Tice H."/>
            <person name="Pitluck S."/>
            <person name="Chertkov O."/>
            <person name="Brettin T."/>
            <person name="Bruce D."/>
            <person name="Han C."/>
            <person name="Tapia R."/>
            <person name="Gilna P."/>
            <person name="Schmutz J."/>
            <person name="Larimer F."/>
            <person name="Land M."/>
            <person name="Hauser L."/>
            <person name="Kyrpides N."/>
            <person name="Mikhailova N."/>
            <person name="Wu J.H.D."/>
            <person name="Newcomb M."/>
            <person name="Richardson P."/>
        </authorList>
    </citation>
    <scope>NUCLEOTIDE SEQUENCE [LARGE SCALE GENOMIC DNA]</scope>
    <source>
        <strain>ATCC 27405 / DSM 1237 / JCM 9322 / NBRC 103400 / NCIMB 10682 / NRRL B-4536 / VPI 7372</strain>
    </source>
</reference>
<sequence length="122" mass="13455">MIQVQTMLKVADNTGAKKVMCIKVLGGSKRKYANIGDVIVASVKDATPGGVVKKGDVVRCVIVRSKRGIRRPDGSYIRFDENAAVLIREDKNPRGTRIFGPVARELRDKEYMKILSLAPEVL</sequence>
<protein>
    <recommendedName>
        <fullName evidence="1">Large ribosomal subunit protein uL14</fullName>
    </recommendedName>
    <alternativeName>
        <fullName evidence="2">50S ribosomal protein L14</fullName>
    </alternativeName>
</protein>
<gene>
    <name evidence="1" type="primary">rplN</name>
    <name type="ordered locus">Cthe_2913</name>
</gene>
<comment type="function">
    <text evidence="1">Binds to 23S rRNA. Forms part of two intersubunit bridges in the 70S ribosome.</text>
</comment>
<comment type="subunit">
    <text evidence="1">Part of the 50S ribosomal subunit. Forms a cluster with proteins L3 and L19. In the 70S ribosome, L14 and L19 interact and together make contacts with the 16S rRNA in bridges B5 and B8.</text>
</comment>
<comment type="similarity">
    <text evidence="1">Belongs to the universal ribosomal protein uL14 family.</text>
</comment>